<sequence length="251" mass="26934">MLAKRIIPCLDIKDGQTVKGTNFVNLRQAGDPVELGRAYSEQGADELVFLDITASHEGRKTFTELVKRIAANINIPFTVGGGINELSDVDRLLNAGADKISINSSAIRNPQLIDDIAKNFGSQVCVLAVDAKQTENGWKCYLNGGRIETDKELLAWTKEAQERGAGEILFTSMNHDGVKTGYANEALASLADQLSIPVIASGGAGLKEHFRDAFLVGKADAALAASVFHFGEIKIPELKSYLCGEGITIRG</sequence>
<feature type="chain" id="PRO_0000142122" description="Imidazole glycerol phosphate synthase subunit HisF">
    <location>
        <begin position="1"/>
        <end position="251"/>
    </location>
</feature>
<feature type="active site" evidence="1">
    <location>
        <position position="11"/>
    </location>
</feature>
<feature type="active site" evidence="1">
    <location>
        <position position="130"/>
    </location>
</feature>
<reference key="1">
    <citation type="journal article" date="2003" name="Science">
        <title>A genomic view of the human-Bacteroides thetaiotaomicron symbiosis.</title>
        <authorList>
            <person name="Xu J."/>
            <person name="Bjursell M.K."/>
            <person name="Himrod J."/>
            <person name="Deng S."/>
            <person name="Carmichael L.K."/>
            <person name="Chiang H.C."/>
            <person name="Hooper L.V."/>
            <person name="Gordon J.I."/>
        </authorList>
    </citation>
    <scope>NUCLEOTIDE SEQUENCE [LARGE SCALE GENOMIC DNA]</scope>
    <source>
        <strain>ATCC 29148 / DSM 2079 / JCM 5827 / CCUG 10774 / NCTC 10582 / VPI-5482 / E50</strain>
    </source>
</reference>
<name>HIS6_BACTN</name>
<proteinExistence type="inferred from homology"/>
<dbReference type="EC" id="4.3.2.10" evidence="1"/>
<dbReference type="EMBL" id="AE015928">
    <property type="protein sequence ID" value="AAO76485.1"/>
    <property type="molecule type" value="Genomic_DNA"/>
</dbReference>
<dbReference type="RefSeq" id="NP_810291.1">
    <property type="nucleotide sequence ID" value="NC_004663.1"/>
</dbReference>
<dbReference type="RefSeq" id="WP_008762398.1">
    <property type="nucleotide sequence ID" value="NZ_UYXG01000037.1"/>
</dbReference>
<dbReference type="SMR" id="Q8A7Z6"/>
<dbReference type="FunCoup" id="Q8A7Z6">
    <property type="interactions" value="528"/>
</dbReference>
<dbReference type="STRING" id="226186.BT_1378"/>
<dbReference type="PaxDb" id="226186-BT_1378"/>
<dbReference type="EnsemblBacteria" id="AAO76485">
    <property type="protein sequence ID" value="AAO76485"/>
    <property type="gene ID" value="BT_1378"/>
</dbReference>
<dbReference type="GeneID" id="60927359"/>
<dbReference type="KEGG" id="bth:BT_1378"/>
<dbReference type="PATRIC" id="fig|226186.12.peg.1413"/>
<dbReference type="eggNOG" id="COG0107">
    <property type="taxonomic scope" value="Bacteria"/>
</dbReference>
<dbReference type="HOGENOM" id="CLU_048577_4_0_10"/>
<dbReference type="InParanoid" id="Q8A7Z6"/>
<dbReference type="OrthoDB" id="9781903at2"/>
<dbReference type="UniPathway" id="UPA00031">
    <property type="reaction ID" value="UER00010"/>
</dbReference>
<dbReference type="Proteomes" id="UP000001414">
    <property type="component" value="Chromosome"/>
</dbReference>
<dbReference type="GO" id="GO:0005737">
    <property type="term" value="C:cytoplasm"/>
    <property type="evidence" value="ECO:0007669"/>
    <property type="project" value="UniProtKB-SubCell"/>
</dbReference>
<dbReference type="GO" id="GO:0000107">
    <property type="term" value="F:imidazoleglycerol-phosphate synthase activity"/>
    <property type="evidence" value="ECO:0000318"/>
    <property type="project" value="GO_Central"/>
</dbReference>
<dbReference type="GO" id="GO:0016829">
    <property type="term" value="F:lyase activity"/>
    <property type="evidence" value="ECO:0007669"/>
    <property type="project" value="UniProtKB-KW"/>
</dbReference>
<dbReference type="GO" id="GO:0000105">
    <property type="term" value="P:L-histidine biosynthetic process"/>
    <property type="evidence" value="ECO:0007669"/>
    <property type="project" value="UniProtKB-UniRule"/>
</dbReference>
<dbReference type="CDD" id="cd04731">
    <property type="entry name" value="HisF"/>
    <property type="match status" value="1"/>
</dbReference>
<dbReference type="FunFam" id="3.20.20.70:FF:000006">
    <property type="entry name" value="Imidazole glycerol phosphate synthase subunit HisF"/>
    <property type="match status" value="1"/>
</dbReference>
<dbReference type="Gene3D" id="3.20.20.70">
    <property type="entry name" value="Aldolase class I"/>
    <property type="match status" value="1"/>
</dbReference>
<dbReference type="HAMAP" id="MF_01013">
    <property type="entry name" value="HisF"/>
    <property type="match status" value="1"/>
</dbReference>
<dbReference type="InterPro" id="IPR013785">
    <property type="entry name" value="Aldolase_TIM"/>
</dbReference>
<dbReference type="InterPro" id="IPR006062">
    <property type="entry name" value="His_biosynth"/>
</dbReference>
<dbReference type="InterPro" id="IPR004651">
    <property type="entry name" value="HisF"/>
</dbReference>
<dbReference type="InterPro" id="IPR050064">
    <property type="entry name" value="IGPS_HisA/HisF"/>
</dbReference>
<dbReference type="InterPro" id="IPR011060">
    <property type="entry name" value="RibuloseP-bd_barrel"/>
</dbReference>
<dbReference type="NCBIfam" id="TIGR00735">
    <property type="entry name" value="hisF"/>
    <property type="match status" value="1"/>
</dbReference>
<dbReference type="PANTHER" id="PTHR21235:SF2">
    <property type="entry name" value="IMIDAZOLE GLYCEROL PHOSPHATE SYNTHASE HISHF"/>
    <property type="match status" value="1"/>
</dbReference>
<dbReference type="PANTHER" id="PTHR21235">
    <property type="entry name" value="IMIDAZOLE GLYCEROL PHOSPHATE SYNTHASE SUBUNIT HISF/H IGP SYNTHASE SUBUNIT HISF/H"/>
    <property type="match status" value="1"/>
</dbReference>
<dbReference type="Pfam" id="PF00977">
    <property type="entry name" value="His_biosynth"/>
    <property type="match status" value="1"/>
</dbReference>
<dbReference type="SUPFAM" id="SSF51366">
    <property type="entry name" value="Ribulose-phoshate binding barrel"/>
    <property type="match status" value="1"/>
</dbReference>
<protein>
    <recommendedName>
        <fullName evidence="1">Imidazole glycerol phosphate synthase subunit HisF</fullName>
        <ecNumber evidence="1">4.3.2.10</ecNumber>
    </recommendedName>
    <alternativeName>
        <fullName evidence="1">IGP synthase cyclase subunit</fullName>
    </alternativeName>
    <alternativeName>
        <fullName evidence="1">IGP synthase subunit HisF</fullName>
    </alternativeName>
    <alternativeName>
        <fullName evidence="1">ImGP synthase subunit HisF</fullName>
        <shortName evidence="1">IGPS subunit HisF</shortName>
    </alternativeName>
</protein>
<organism>
    <name type="scientific">Bacteroides thetaiotaomicron (strain ATCC 29148 / DSM 2079 / JCM 5827 / CCUG 10774 / NCTC 10582 / VPI-5482 / E50)</name>
    <dbReference type="NCBI Taxonomy" id="226186"/>
    <lineage>
        <taxon>Bacteria</taxon>
        <taxon>Pseudomonadati</taxon>
        <taxon>Bacteroidota</taxon>
        <taxon>Bacteroidia</taxon>
        <taxon>Bacteroidales</taxon>
        <taxon>Bacteroidaceae</taxon>
        <taxon>Bacteroides</taxon>
    </lineage>
</organism>
<accession>Q8A7Z6</accession>
<evidence type="ECO:0000255" key="1">
    <source>
        <dbReference type="HAMAP-Rule" id="MF_01013"/>
    </source>
</evidence>
<keyword id="KW-0028">Amino-acid biosynthesis</keyword>
<keyword id="KW-0963">Cytoplasm</keyword>
<keyword id="KW-0368">Histidine biosynthesis</keyword>
<keyword id="KW-0456">Lyase</keyword>
<keyword id="KW-1185">Reference proteome</keyword>
<comment type="function">
    <text evidence="1">IGPS catalyzes the conversion of PRFAR and glutamine to IGP, AICAR and glutamate. The HisF subunit catalyzes the cyclization activity that produces IGP and AICAR from PRFAR using the ammonia provided by the HisH subunit.</text>
</comment>
<comment type="catalytic activity">
    <reaction evidence="1">
        <text>5-[(5-phospho-1-deoxy-D-ribulos-1-ylimino)methylamino]-1-(5-phospho-beta-D-ribosyl)imidazole-4-carboxamide + L-glutamine = D-erythro-1-(imidazol-4-yl)glycerol 3-phosphate + 5-amino-1-(5-phospho-beta-D-ribosyl)imidazole-4-carboxamide + L-glutamate + H(+)</text>
        <dbReference type="Rhea" id="RHEA:24793"/>
        <dbReference type="ChEBI" id="CHEBI:15378"/>
        <dbReference type="ChEBI" id="CHEBI:29985"/>
        <dbReference type="ChEBI" id="CHEBI:58278"/>
        <dbReference type="ChEBI" id="CHEBI:58359"/>
        <dbReference type="ChEBI" id="CHEBI:58475"/>
        <dbReference type="ChEBI" id="CHEBI:58525"/>
        <dbReference type="EC" id="4.3.2.10"/>
    </reaction>
</comment>
<comment type="pathway">
    <text evidence="1">Amino-acid biosynthesis; L-histidine biosynthesis; L-histidine from 5-phospho-alpha-D-ribose 1-diphosphate: step 5/9.</text>
</comment>
<comment type="subunit">
    <text evidence="1">Heterodimer of HisH and HisF.</text>
</comment>
<comment type="subcellular location">
    <subcellularLocation>
        <location evidence="1">Cytoplasm</location>
    </subcellularLocation>
</comment>
<comment type="similarity">
    <text evidence="1">Belongs to the HisA/HisF family.</text>
</comment>
<gene>
    <name evidence="1" type="primary">hisF</name>
    <name type="ordered locus">BT_1378</name>
</gene>